<comment type="function">
    <text evidence="1">Catalyzes the reversible isomerization-deamination of glucosamine 6-phosphate (GlcN6P) to form fructose 6-phosphate (Fru6P) and ammonium ion.</text>
</comment>
<comment type="catalytic activity">
    <reaction evidence="1">
        <text>alpha-D-glucosamine 6-phosphate + H2O = beta-D-fructose 6-phosphate + NH4(+)</text>
        <dbReference type="Rhea" id="RHEA:12172"/>
        <dbReference type="ChEBI" id="CHEBI:15377"/>
        <dbReference type="ChEBI" id="CHEBI:28938"/>
        <dbReference type="ChEBI" id="CHEBI:57634"/>
        <dbReference type="ChEBI" id="CHEBI:75989"/>
        <dbReference type="EC" id="3.5.99.6"/>
    </reaction>
</comment>
<comment type="pathway">
    <text evidence="1">Amino-sugar metabolism; N-acetylneuraminate degradation; D-fructose 6-phosphate from N-acetylneuraminate: step 5/5.</text>
</comment>
<comment type="similarity">
    <text evidence="1">Belongs to the glucosamine/galactosamine-6-phosphate isomerase family. NagB subfamily.</text>
</comment>
<keyword id="KW-0119">Carbohydrate metabolism</keyword>
<keyword id="KW-0378">Hydrolase</keyword>
<name>NAGB_STREM</name>
<dbReference type="EC" id="3.5.99.6" evidence="1"/>
<dbReference type="EMBL" id="CP001129">
    <property type="protein sequence ID" value="ACG62023.1"/>
    <property type="molecule type" value="Genomic_DNA"/>
</dbReference>
<dbReference type="RefSeq" id="WP_012515299.1">
    <property type="nucleotide sequence ID" value="NC_011134.1"/>
</dbReference>
<dbReference type="SMR" id="B4U206"/>
<dbReference type="KEGG" id="sez:Sez_0658"/>
<dbReference type="HOGENOM" id="CLU_049611_1_0_9"/>
<dbReference type="UniPathway" id="UPA00629">
    <property type="reaction ID" value="UER00684"/>
</dbReference>
<dbReference type="Proteomes" id="UP000001873">
    <property type="component" value="Chromosome"/>
</dbReference>
<dbReference type="GO" id="GO:0005737">
    <property type="term" value="C:cytoplasm"/>
    <property type="evidence" value="ECO:0007669"/>
    <property type="project" value="TreeGrafter"/>
</dbReference>
<dbReference type="GO" id="GO:0004342">
    <property type="term" value="F:glucosamine-6-phosphate deaminase activity"/>
    <property type="evidence" value="ECO:0007669"/>
    <property type="project" value="UniProtKB-UniRule"/>
</dbReference>
<dbReference type="GO" id="GO:0042802">
    <property type="term" value="F:identical protein binding"/>
    <property type="evidence" value="ECO:0007669"/>
    <property type="project" value="TreeGrafter"/>
</dbReference>
<dbReference type="GO" id="GO:0005975">
    <property type="term" value="P:carbohydrate metabolic process"/>
    <property type="evidence" value="ECO:0007669"/>
    <property type="project" value="InterPro"/>
</dbReference>
<dbReference type="GO" id="GO:0006043">
    <property type="term" value="P:glucosamine catabolic process"/>
    <property type="evidence" value="ECO:0007669"/>
    <property type="project" value="TreeGrafter"/>
</dbReference>
<dbReference type="GO" id="GO:0006046">
    <property type="term" value="P:N-acetylglucosamine catabolic process"/>
    <property type="evidence" value="ECO:0007669"/>
    <property type="project" value="TreeGrafter"/>
</dbReference>
<dbReference type="GO" id="GO:0019262">
    <property type="term" value="P:N-acetylneuraminate catabolic process"/>
    <property type="evidence" value="ECO:0007669"/>
    <property type="project" value="UniProtKB-UniRule"/>
</dbReference>
<dbReference type="CDD" id="cd01399">
    <property type="entry name" value="GlcN6P_deaminase"/>
    <property type="match status" value="1"/>
</dbReference>
<dbReference type="FunFam" id="3.40.50.1360:FF:000003">
    <property type="entry name" value="Glucosamine-6-phosphate deaminase"/>
    <property type="match status" value="1"/>
</dbReference>
<dbReference type="Gene3D" id="3.40.50.1360">
    <property type="match status" value="1"/>
</dbReference>
<dbReference type="HAMAP" id="MF_01241">
    <property type="entry name" value="GlcN6P_deamin"/>
    <property type="match status" value="1"/>
</dbReference>
<dbReference type="InterPro" id="IPR006148">
    <property type="entry name" value="Glc/Gal-6P_isomerase"/>
</dbReference>
<dbReference type="InterPro" id="IPR004547">
    <property type="entry name" value="Glucosamine6P_isomerase"/>
</dbReference>
<dbReference type="InterPro" id="IPR018321">
    <property type="entry name" value="Glucosamine6P_isomerase_CS"/>
</dbReference>
<dbReference type="InterPro" id="IPR037171">
    <property type="entry name" value="NagB/RpiA_transferase-like"/>
</dbReference>
<dbReference type="NCBIfam" id="TIGR00502">
    <property type="entry name" value="nagB"/>
    <property type="match status" value="1"/>
</dbReference>
<dbReference type="PANTHER" id="PTHR11280">
    <property type="entry name" value="GLUCOSAMINE-6-PHOSPHATE ISOMERASE"/>
    <property type="match status" value="1"/>
</dbReference>
<dbReference type="PANTHER" id="PTHR11280:SF5">
    <property type="entry name" value="GLUCOSAMINE-6-PHOSPHATE ISOMERASE"/>
    <property type="match status" value="1"/>
</dbReference>
<dbReference type="Pfam" id="PF01182">
    <property type="entry name" value="Glucosamine_iso"/>
    <property type="match status" value="1"/>
</dbReference>
<dbReference type="SUPFAM" id="SSF100950">
    <property type="entry name" value="NagB/RpiA/CoA transferase-like"/>
    <property type="match status" value="1"/>
</dbReference>
<dbReference type="PROSITE" id="PS01161">
    <property type="entry name" value="GLC_GALNAC_ISOMERASE"/>
    <property type="match status" value="1"/>
</dbReference>
<sequence length="234" mass="25300">MKIIRVQDQLEGGKVAFSLLKESLAEGATTLGLATGSTPITFYQELVNSDLDCSALTSINLDEYVGLPVENDQSYDYFMRDQLFNAKPFKESFLPNGLADDLEAEVKRYDQVIAEHPIDFQILGIGRNGHIGFNEPGTSFAEKTHVVDLQASTIEANSRFFASIDDVPKQAISMGIASIMASKMIVLLAFGKEKAAAIKGMVSGPVTEALPASVLQQHDNVVVIIDEAAASELD</sequence>
<accession>B4U206</accession>
<reference key="1">
    <citation type="journal article" date="2008" name="PLoS ONE">
        <title>Genome sequence of a lancefield group C Streptococcus zooepidemicus strain causing epidemic nephritis: new information about an old disease.</title>
        <authorList>
            <person name="Beres S.B."/>
            <person name="Sesso R."/>
            <person name="Pinto S.W.L."/>
            <person name="Hoe N.P."/>
            <person name="Porcella S.F."/>
            <person name="Deleo F.R."/>
            <person name="Musser J.M."/>
        </authorList>
    </citation>
    <scope>NUCLEOTIDE SEQUENCE [LARGE SCALE GENOMIC DNA]</scope>
    <source>
        <strain>MGCS10565</strain>
    </source>
</reference>
<evidence type="ECO:0000255" key="1">
    <source>
        <dbReference type="HAMAP-Rule" id="MF_01241"/>
    </source>
</evidence>
<gene>
    <name evidence="1" type="primary">nagB</name>
    <name type="ordered locus">Sez_0658</name>
</gene>
<protein>
    <recommendedName>
        <fullName evidence="1">Glucosamine-6-phosphate deaminase</fullName>
        <ecNumber evidence="1">3.5.99.6</ecNumber>
    </recommendedName>
    <alternativeName>
        <fullName evidence="1">GlcN6P deaminase</fullName>
        <shortName evidence="1">GNPDA</shortName>
    </alternativeName>
    <alternativeName>
        <fullName evidence="1">Glucosamine-6-phosphate isomerase</fullName>
    </alternativeName>
</protein>
<proteinExistence type="inferred from homology"/>
<feature type="chain" id="PRO_1000139794" description="Glucosamine-6-phosphate deaminase">
    <location>
        <begin position="1"/>
        <end position="234"/>
    </location>
</feature>
<feature type="active site" description="Proton acceptor; for enolization step" evidence="1">
    <location>
        <position position="62"/>
    </location>
</feature>
<feature type="active site" description="For ring-opening step" evidence="1">
    <location>
        <position position="128"/>
    </location>
</feature>
<feature type="active site" description="Proton acceptor; for ring-opening step" evidence="1">
    <location>
        <position position="130"/>
    </location>
</feature>
<feature type="active site" description="For ring-opening step" evidence="1">
    <location>
        <position position="135"/>
    </location>
</feature>
<organism>
    <name type="scientific">Streptococcus equi subsp. zooepidemicus (strain MGCS10565)</name>
    <dbReference type="NCBI Taxonomy" id="552526"/>
    <lineage>
        <taxon>Bacteria</taxon>
        <taxon>Bacillati</taxon>
        <taxon>Bacillota</taxon>
        <taxon>Bacilli</taxon>
        <taxon>Lactobacillales</taxon>
        <taxon>Streptococcaceae</taxon>
        <taxon>Streptococcus</taxon>
    </lineage>
</organism>